<comment type="function">
    <text evidence="1">Protease subunit of a proteasome-like degradation complex believed to be a general protein degrading machinery.</text>
</comment>
<comment type="catalytic activity">
    <reaction evidence="1">
        <text>ATP-dependent cleavage of peptide bonds with broad specificity.</text>
        <dbReference type="EC" id="3.4.25.2"/>
    </reaction>
</comment>
<comment type="activity regulation">
    <text evidence="1">Allosterically activated by HslU binding.</text>
</comment>
<comment type="subunit">
    <text evidence="1">A double ring-shaped homohexamer of HslV is capped on each side by a ring-shaped HslU homohexamer. The assembly of the HslU/HslV complex is dependent on binding of ATP.</text>
</comment>
<comment type="subcellular location">
    <subcellularLocation>
        <location evidence="1">Cytoplasm</location>
    </subcellularLocation>
</comment>
<comment type="similarity">
    <text evidence="1">Belongs to the peptidase T1B family. HslV subfamily.</text>
</comment>
<keyword id="KW-0021">Allosteric enzyme</keyword>
<keyword id="KW-0963">Cytoplasm</keyword>
<keyword id="KW-0378">Hydrolase</keyword>
<keyword id="KW-0479">Metal-binding</keyword>
<keyword id="KW-0645">Protease</keyword>
<keyword id="KW-1185">Reference proteome</keyword>
<keyword id="KW-0915">Sodium</keyword>
<keyword id="KW-0888">Threonine protease</keyword>
<gene>
    <name evidence="1" type="primary">hslV</name>
    <name type="ordered locus">SPO3880</name>
</gene>
<name>HSLV_RUEPO</name>
<feature type="chain" id="PRO_0000336794" description="ATP-dependent protease subunit HslV">
    <location>
        <begin position="1"/>
        <end position="185"/>
    </location>
</feature>
<feature type="active site" evidence="1">
    <location>
        <position position="12"/>
    </location>
</feature>
<feature type="binding site" evidence="1">
    <location>
        <position position="168"/>
    </location>
    <ligand>
        <name>Na(+)</name>
        <dbReference type="ChEBI" id="CHEBI:29101"/>
    </ligand>
</feature>
<feature type="binding site" evidence="1">
    <location>
        <position position="171"/>
    </location>
    <ligand>
        <name>Na(+)</name>
        <dbReference type="ChEBI" id="CHEBI:29101"/>
    </ligand>
</feature>
<feature type="binding site" evidence="1">
    <location>
        <position position="174"/>
    </location>
    <ligand>
        <name>Na(+)</name>
        <dbReference type="ChEBI" id="CHEBI:29101"/>
    </ligand>
</feature>
<organism>
    <name type="scientific">Ruegeria pomeroyi (strain ATCC 700808 / DSM 15171 / DSS-3)</name>
    <name type="common">Silicibacter pomeroyi</name>
    <dbReference type="NCBI Taxonomy" id="246200"/>
    <lineage>
        <taxon>Bacteria</taxon>
        <taxon>Pseudomonadati</taxon>
        <taxon>Pseudomonadota</taxon>
        <taxon>Alphaproteobacteria</taxon>
        <taxon>Rhodobacterales</taxon>
        <taxon>Roseobacteraceae</taxon>
        <taxon>Ruegeria</taxon>
    </lineage>
</organism>
<dbReference type="EC" id="3.4.25.2" evidence="1"/>
<dbReference type="EMBL" id="CP000031">
    <property type="protein sequence ID" value="AAV97094.1"/>
    <property type="molecule type" value="Genomic_DNA"/>
</dbReference>
<dbReference type="RefSeq" id="WP_011049551.1">
    <property type="nucleotide sequence ID" value="NC_003911.12"/>
</dbReference>
<dbReference type="SMR" id="Q5LLP2"/>
<dbReference type="STRING" id="246200.SPO3880"/>
<dbReference type="MEROPS" id="T01.006"/>
<dbReference type="PaxDb" id="246200-SPO3880"/>
<dbReference type="KEGG" id="sil:SPO3880"/>
<dbReference type="eggNOG" id="COG5405">
    <property type="taxonomic scope" value="Bacteria"/>
</dbReference>
<dbReference type="HOGENOM" id="CLU_093872_1_0_5"/>
<dbReference type="OrthoDB" id="9804884at2"/>
<dbReference type="Proteomes" id="UP000001023">
    <property type="component" value="Chromosome"/>
</dbReference>
<dbReference type="GO" id="GO:0009376">
    <property type="term" value="C:HslUV protease complex"/>
    <property type="evidence" value="ECO:0007669"/>
    <property type="project" value="UniProtKB-UniRule"/>
</dbReference>
<dbReference type="GO" id="GO:0005839">
    <property type="term" value="C:proteasome core complex"/>
    <property type="evidence" value="ECO:0007669"/>
    <property type="project" value="InterPro"/>
</dbReference>
<dbReference type="GO" id="GO:0046872">
    <property type="term" value="F:metal ion binding"/>
    <property type="evidence" value="ECO:0007669"/>
    <property type="project" value="UniProtKB-KW"/>
</dbReference>
<dbReference type="GO" id="GO:0004298">
    <property type="term" value="F:threonine-type endopeptidase activity"/>
    <property type="evidence" value="ECO:0007669"/>
    <property type="project" value="UniProtKB-KW"/>
</dbReference>
<dbReference type="GO" id="GO:0051603">
    <property type="term" value="P:proteolysis involved in protein catabolic process"/>
    <property type="evidence" value="ECO:0007669"/>
    <property type="project" value="InterPro"/>
</dbReference>
<dbReference type="CDD" id="cd01913">
    <property type="entry name" value="protease_HslV"/>
    <property type="match status" value="1"/>
</dbReference>
<dbReference type="Gene3D" id="3.60.20.10">
    <property type="entry name" value="Glutamine Phosphoribosylpyrophosphate, subunit 1, domain 1"/>
    <property type="match status" value="1"/>
</dbReference>
<dbReference type="HAMAP" id="MF_00248">
    <property type="entry name" value="HslV"/>
    <property type="match status" value="1"/>
</dbReference>
<dbReference type="InterPro" id="IPR022281">
    <property type="entry name" value="ATP-dep_Prtase_HsIV_su"/>
</dbReference>
<dbReference type="InterPro" id="IPR029055">
    <property type="entry name" value="Ntn_hydrolases_N"/>
</dbReference>
<dbReference type="InterPro" id="IPR001353">
    <property type="entry name" value="Proteasome_sua/b"/>
</dbReference>
<dbReference type="InterPro" id="IPR023333">
    <property type="entry name" value="Proteasome_suB-type"/>
</dbReference>
<dbReference type="NCBIfam" id="TIGR03692">
    <property type="entry name" value="ATP_dep_HslV"/>
    <property type="match status" value="1"/>
</dbReference>
<dbReference type="NCBIfam" id="NF003964">
    <property type="entry name" value="PRK05456.1"/>
    <property type="match status" value="1"/>
</dbReference>
<dbReference type="PANTHER" id="PTHR32194:SF7">
    <property type="entry name" value="ATP-DEPENDENT PROTEASE SUBUNIT HSLV"/>
    <property type="match status" value="1"/>
</dbReference>
<dbReference type="PANTHER" id="PTHR32194">
    <property type="entry name" value="METALLOPROTEASE TLDD"/>
    <property type="match status" value="1"/>
</dbReference>
<dbReference type="Pfam" id="PF00227">
    <property type="entry name" value="Proteasome"/>
    <property type="match status" value="1"/>
</dbReference>
<dbReference type="PIRSF" id="PIRSF039093">
    <property type="entry name" value="HslV"/>
    <property type="match status" value="1"/>
</dbReference>
<dbReference type="SUPFAM" id="SSF56235">
    <property type="entry name" value="N-terminal nucleophile aminohydrolases (Ntn hydrolases)"/>
    <property type="match status" value="1"/>
</dbReference>
<dbReference type="PROSITE" id="PS51476">
    <property type="entry name" value="PROTEASOME_BETA_2"/>
    <property type="match status" value="1"/>
</dbReference>
<evidence type="ECO:0000255" key="1">
    <source>
        <dbReference type="HAMAP-Rule" id="MF_00248"/>
    </source>
</evidence>
<protein>
    <recommendedName>
        <fullName evidence="1">ATP-dependent protease subunit HslV</fullName>
        <ecNumber evidence="1">3.4.25.2</ecNumber>
    </recommendedName>
</protein>
<proteinExistence type="inferred from homology"/>
<reference key="1">
    <citation type="journal article" date="2004" name="Nature">
        <title>Genome sequence of Silicibacter pomeroyi reveals adaptations to the marine environment.</title>
        <authorList>
            <person name="Moran M.A."/>
            <person name="Buchan A."/>
            <person name="Gonzalez J.M."/>
            <person name="Heidelberg J.F."/>
            <person name="Whitman W.B."/>
            <person name="Kiene R.P."/>
            <person name="Henriksen J.R."/>
            <person name="King G.M."/>
            <person name="Belas R."/>
            <person name="Fuqua C."/>
            <person name="Brinkac L.M."/>
            <person name="Lewis M."/>
            <person name="Johri S."/>
            <person name="Weaver B."/>
            <person name="Pai G."/>
            <person name="Eisen J.A."/>
            <person name="Rahe E."/>
            <person name="Sheldon W.M."/>
            <person name="Ye W."/>
            <person name="Miller T.R."/>
            <person name="Carlton J."/>
            <person name="Rasko D.A."/>
            <person name="Paulsen I.T."/>
            <person name="Ren Q."/>
            <person name="Daugherty S.C."/>
            <person name="DeBoy R.T."/>
            <person name="Dodson R.J."/>
            <person name="Durkin A.S."/>
            <person name="Madupu R."/>
            <person name="Nelson W.C."/>
            <person name="Sullivan S.A."/>
            <person name="Rosovitz M.J."/>
            <person name="Haft D.H."/>
            <person name="Selengut J."/>
            <person name="Ward N."/>
        </authorList>
    </citation>
    <scope>NUCLEOTIDE SEQUENCE [LARGE SCALE GENOMIC DNA]</scope>
    <source>
        <strain>ATCC 700808 / DSM 15171 / DSS-3</strain>
    </source>
</reference>
<reference key="2">
    <citation type="journal article" date="2014" name="Stand. Genomic Sci.">
        <title>An updated genome annotation for the model marine bacterium Ruegeria pomeroyi DSS-3.</title>
        <authorList>
            <person name="Rivers A.R."/>
            <person name="Smith C.B."/>
            <person name="Moran M.A."/>
        </authorList>
    </citation>
    <scope>GENOME REANNOTATION</scope>
    <source>
        <strain>ATCC 700808 / DSM 15171 / DSS-3</strain>
    </source>
</reference>
<sequence>MADDQFPGWHGTTIIGVKKGGEVVIAGDGQVSLGQTVIKGTARKVRRLSPGGYHVVAGFAGSTADAFTLLERLEAKLEATPGQLARASVELAKDWRTDKYLQKLEAMLIVSDGQDMFVITGAGDVLEPEHDVAAIGSGGNFALAAARAMMDSDKSAEEVARAAMAIAADICVYTNGNLTVEKIAK</sequence>
<accession>Q5LLP2</accession>